<comment type="function">
    <text>Rhs elements have a nonessential function. They may play an important role in the natural ecology of the cell.</text>
</comment>
<comment type="similarity">
    <text evidence="2">Belongs to the RHS family.</text>
</comment>
<comment type="caution">
    <text evidence="2">Could be the product of a pseudogene.</text>
</comment>
<proteinExistence type="uncertain"/>
<reference key="1">
    <citation type="journal article" date="1996" name="DNA Res.">
        <title>A 570-kb DNA sequence of the Escherichia coli K-12 genome corresponding to the 28.0-40.1 min region on the linkage map.</title>
        <authorList>
            <person name="Aiba H."/>
            <person name="Baba T."/>
            <person name="Fujita K."/>
            <person name="Hayashi K."/>
            <person name="Inada T."/>
            <person name="Isono K."/>
            <person name="Itoh T."/>
            <person name="Kasai H."/>
            <person name="Kashimoto K."/>
            <person name="Kimura S."/>
            <person name="Kitakawa M."/>
            <person name="Kitagawa M."/>
            <person name="Makino K."/>
            <person name="Miki T."/>
            <person name="Mizobuchi K."/>
            <person name="Mori H."/>
            <person name="Mori T."/>
            <person name="Motomura K."/>
            <person name="Nakade S."/>
            <person name="Nakamura Y."/>
            <person name="Nashimoto H."/>
            <person name="Nishio Y."/>
            <person name="Oshima T."/>
            <person name="Saito N."/>
            <person name="Sampei G."/>
            <person name="Seki Y."/>
            <person name="Sivasundaram S."/>
            <person name="Tagami H."/>
            <person name="Takeda J."/>
            <person name="Takemoto K."/>
            <person name="Takeuchi Y."/>
            <person name="Wada C."/>
            <person name="Yamamoto Y."/>
            <person name="Horiuchi T."/>
        </authorList>
    </citation>
    <scope>NUCLEOTIDE SEQUENCE [LARGE SCALE GENOMIC DNA]</scope>
    <source>
        <strain>K12 / W3110 / ATCC 27325 / DSM 5911</strain>
    </source>
</reference>
<reference key="2">
    <citation type="journal article" date="1997" name="Science">
        <title>The complete genome sequence of Escherichia coli K-12.</title>
        <authorList>
            <person name="Blattner F.R."/>
            <person name="Plunkett G. III"/>
            <person name="Bloch C.A."/>
            <person name="Perna N.T."/>
            <person name="Burland V."/>
            <person name="Riley M."/>
            <person name="Collado-Vides J."/>
            <person name="Glasner J.D."/>
            <person name="Rode C.K."/>
            <person name="Mayhew G.F."/>
            <person name="Gregor J."/>
            <person name="Davis N.W."/>
            <person name="Kirkpatrick H.A."/>
            <person name="Goeden M.A."/>
            <person name="Rose D.J."/>
            <person name="Mau B."/>
            <person name="Shao Y."/>
        </authorList>
    </citation>
    <scope>NUCLEOTIDE SEQUENCE [LARGE SCALE GENOMIC DNA]</scope>
    <source>
        <strain>K12 / MG1655 / ATCC 47076</strain>
    </source>
</reference>
<reference key="3">
    <citation type="journal article" date="2006" name="Mol. Syst. Biol.">
        <title>Highly accurate genome sequences of Escherichia coli K-12 strains MG1655 and W3110.</title>
        <authorList>
            <person name="Hayashi K."/>
            <person name="Morooka N."/>
            <person name="Yamamoto Y."/>
            <person name="Fujita K."/>
            <person name="Isono K."/>
            <person name="Choi S."/>
            <person name="Ohtsubo E."/>
            <person name="Baba T."/>
            <person name="Wanner B.L."/>
            <person name="Mori H."/>
            <person name="Horiuchi T."/>
        </authorList>
    </citation>
    <scope>NUCLEOTIDE SEQUENCE [LARGE SCALE GENOMIC DNA]</scope>
    <source>
        <strain>K12 / W3110 / ATCC 27325 / DSM 5911</strain>
    </source>
</reference>
<reference key="4">
    <citation type="journal article" date="1991" name="Nucleic Acids Res.">
        <title>The RhsD-E subfamily of Escherichia coli K-12.</title>
        <authorList>
            <person name="Sadosky A.B."/>
            <person name="Gray J.A."/>
            <person name="Hill C.W."/>
        </authorList>
    </citation>
    <scope>NUCLEOTIDE SEQUENCE [GENOMIC DNA] OF 2-682</scope>
    <source>
        <strain>K12</strain>
    </source>
</reference>
<reference key="5">
    <citation type="submission" date="1996-12" db="EMBL/GenBank/DDBJ databases">
        <authorList>
            <person name="Hill C.W."/>
        </authorList>
    </citation>
    <scope>SEQUENCE REVISION TO 442</scope>
</reference>
<reference key="6">
    <citation type="journal article" date="1994" name="Mol. Microbiol.">
        <title>Rhs elements of Escherichia coli: a family of genetic composites each encoding a large mosaic protein.</title>
        <authorList>
            <person name="Hill C.W."/>
            <person name="Sandt C.H."/>
            <person name="Vlazny D.A."/>
        </authorList>
    </citation>
    <scope>REVIEW</scope>
</reference>
<accession>P24211</accession>
<accession>P76869</accession>
<accession>P77471</accession>
<name>RHSE_ECOLI</name>
<protein>
    <recommendedName>
        <fullName>Putative protein RhsE</fullName>
    </recommendedName>
</protein>
<keyword id="KW-1185">Reference proteome</keyword>
<dbReference type="EMBL" id="X60998">
    <property type="protein sequence ID" value="CAA43309.1"/>
    <property type="molecule type" value="Genomic_DNA"/>
</dbReference>
<dbReference type="EMBL" id="U00096">
    <property type="status" value="NOT_ANNOTATED_CDS"/>
    <property type="molecule type" value="Genomic_DNA"/>
</dbReference>
<dbReference type="EMBL" id="AP009048">
    <property type="protein sequence ID" value="BAA15087.1"/>
    <property type="molecule type" value="Genomic_DNA"/>
</dbReference>
<dbReference type="PIR" id="C64898">
    <property type="entry name" value="C64898"/>
</dbReference>
<dbReference type="SMR" id="P24211"/>
<dbReference type="BioGRID" id="4260202">
    <property type="interactions" value="166"/>
</dbReference>
<dbReference type="DIP" id="DIP-10703N"/>
<dbReference type="FunCoup" id="P24211">
    <property type="interactions" value="106"/>
</dbReference>
<dbReference type="IntAct" id="P24211">
    <property type="interactions" value="24"/>
</dbReference>
<dbReference type="KEGG" id="ecj:JW1451"/>
<dbReference type="EchoBASE" id="EB0010"/>
<dbReference type="eggNOG" id="COG3209">
    <property type="taxonomic scope" value="Bacteria"/>
</dbReference>
<dbReference type="HOGENOM" id="CLU_001218_4_6_6"/>
<dbReference type="InParanoid" id="P24211"/>
<dbReference type="OMA" id="RIRYESH"/>
<dbReference type="PhylomeDB" id="P24211"/>
<dbReference type="Proteomes" id="UP000000625">
    <property type="component" value="Chromosome"/>
</dbReference>
<dbReference type="Gene3D" id="2.180.10.10">
    <property type="entry name" value="RHS repeat-associated core"/>
    <property type="match status" value="1"/>
</dbReference>
<dbReference type="InterPro" id="IPR054246">
    <property type="entry name" value="DUF6973"/>
</dbReference>
<dbReference type="InterPro" id="IPR001826">
    <property type="entry name" value="RHS"/>
</dbReference>
<dbReference type="InterPro" id="IPR022385">
    <property type="entry name" value="Rhs_assc_core"/>
</dbReference>
<dbReference type="InterPro" id="IPR050708">
    <property type="entry name" value="T6SS_VgrG/RHS"/>
</dbReference>
<dbReference type="NCBIfam" id="TIGR03696">
    <property type="entry name" value="Rhs_assc_core"/>
    <property type="match status" value="1"/>
</dbReference>
<dbReference type="PANTHER" id="PTHR32305">
    <property type="match status" value="1"/>
</dbReference>
<dbReference type="PANTHER" id="PTHR32305:SF15">
    <property type="entry name" value="PROTEIN RHSA-RELATED"/>
    <property type="match status" value="1"/>
</dbReference>
<dbReference type="Pfam" id="PF22322">
    <property type="entry name" value="DUF6973"/>
    <property type="match status" value="1"/>
</dbReference>
<dbReference type="Pfam" id="PF03527">
    <property type="entry name" value="RHS"/>
    <property type="match status" value="1"/>
</dbReference>
<dbReference type="PRINTS" id="PR00394">
    <property type="entry name" value="RHSPROTEIN"/>
</dbReference>
<evidence type="ECO:0000256" key="1">
    <source>
        <dbReference type="SAM" id="MobiDB-lite"/>
    </source>
</evidence>
<evidence type="ECO:0000305" key="2"/>
<organism>
    <name type="scientific">Escherichia coli (strain K12)</name>
    <dbReference type="NCBI Taxonomy" id="83333"/>
    <lineage>
        <taxon>Bacteria</taxon>
        <taxon>Pseudomonadati</taxon>
        <taxon>Pseudomonadota</taxon>
        <taxon>Gammaproteobacteria</taxon>
        <taxon>Enterobacterales</taxon>
        <taxon>Enterobacteriaceae</taxon>
        <taxon>Escherichia</taxon>
    </lineage>
</organism>
<sequence length="682" mass="77142">MSTRLTTLSHTSEGHRVSVHYGYDDKGRLTGERQTVENPETGELLWHHETGHAYNEQGLANRVTPDSLPPVEWLTYGSGYLAGMKLGGTPLLEFTRDRLHRETVRSFGSMAGSNAAYKLTSTYTPAGQLQSQHLNSLVYDRDYGWNDNGDLVRISGPRQTREYGYSATGRLESVRTLAPDLDIRIPYATDPAGNRLPDPELHPDSTLTVWPDNRIAEDAHYVYRHDEYGRLTEKTDRIPAGVIRTDDERTHHYHYDSQHRLVFYTRIQHGEPLVESRYLYDPLGRRMAKRVWRRERDLTGWMSLSRKPEVTWYGWDGDRLTTVQTDTTRIQTVYEPGSFTPLIRVETENGEREKAQRRSLAETLQQEGSENGHGVVFPAELVRLLDRLEEEIRADRVSSESRAWLAQCGLTVEQLARQVEPEYTPARKVHFYHCDHRGLPLALISEDGNTAWRGEYDEWGNQLNEENPHHLHQPYRLPGQQHDEESGLYYNRHRHYDPLQGRYITPDPIGLRGGWNMYQYPLNPIQVIDPMGLDAIENMTSGGLIYAVSGVPGLIAANSITNSAYQFGYDMDAIVGGAHNGAADAMRHCYLMCRMTKTFGSTIADVIGKNHEAAGDRQGQPAKERIMDLKNNTVGIACGDFSAKCSDACIEKYNTGQLFGLDGIKADNPIKAKQGSSDASNY</sequence>
<feature type="chain" id="PRO_0000097329" description="Putative protein RhsE">
    <location>
        <begin position="1"/>
        <end position="682"/>
    </location>
</feature>
<feature type="region of interest" description="Disordered" evidence="1">
    <location>
        <begin position="348"/>
        <end position="372"/>
    </location>
</feature>
<feature type="compositionally biased region" description="Basic and acidic residues" evidence="1">
    <location>
        <begin position="348"/>
        <end position="360"/>
    </location>
</feature>
<gene>
    <name type="primary">rhsE</name>
    <name type="ordered locus">b1456</name>
    <name type="ordered locus">JW1451</name>
</gene>